<keyword id="KW-0274">FAD</keyword>
<keyword id="KW-0285">Flavoprotein</keyword>
<keyword id="KW-0472">Membrane</keyword>
<keyword id="KW-0496">Mitochondrion</keyword>
<keyword id="KW-1000">Mitochondrion outer membrane</keyword>
<keyword id="KW-0520">NAD</keyword>
<keyword id="KW-0560">Oxidoreductase</keyword>
<keyword id="KW-1185">Reference proteome</keyword>
<keyword id="KW-0812">Transmembrane</keyword>
<keyword id="KW-1133">Transmembrane helix</keyword>
<gene>
    <name type="primary">MCR1</name>
    <name type="ordered locus">DEHA2E08228g</name>
</gene>
<proteinExistence type="inferred from homology"/>
<protein>
    <recommendedName>
        <fullName>NADH-cytochrome b5 reductase 2</fullName>
        <ecNumber>1.6.2.2</ecNumber>
    </recommendedName>
    <alternativeName>
        <fullName>Mitochondrial cytochrome b reductase</fullName>
    </alternativeName>
</protein>
<feature type="chain" id="PRO_0000330180" description="NADH-cytochrome b5 reductase 2">
    <location>
        <begin position="1"/>
        <end position="299"/>
    </location>
</feature>
<feature type="transmembrane region" description="Helical" evidence="2">
    <location>
        <begin position="13"/>
        <end position="35"/>
    </location>
</feature>
<feature type="domain" description="FAD-binding FR-type" evidence="3">
    <location>
        <begin position="50"/>
        <end position="154"/>
    </location>
</feature>
<feature type="binding site" evidence="1">
    <location>
        <begin position="157"/>
        <end position="192"/>
    </location>
    <ligand>
        <name>FAD</name>
        <dbReference type="ChEBI" id="CHEBI:57692"/>
    </ligand>
</feature>
<organism>
    <name type="scientific">Debaryomyces hansenii (strain ATCC 36239 / CBS 767 / BCRC 21394 / JCM 1990 / NBRC 0083 / IGC 2968)</name>
    <name type="common">Yeast</name>
    <name type="synonym">Torulaspora hansenii</name>
    <dbReference type="NCBI Taxonomy" id="284592"/>
    <lineage>
        <taxon>Eukaryota</taxon>
        <taxon>Fungi</taxon>
        <taxon>Dikarya</taxon>
        <taxon>Ascomycota</taxon>
        <taxon>Saccharomycotina</taxon>
        <taxon>Pichiomycetes</taxon>
        <taxon>Debaryomycetaceae</taxon>
        <taxon>Debaryomyces</taxon>
    </lineage>
</organism>
<dbReference type="EC" id="1.6.2.2"/>
<dbReference type="EMBL" id="CR382137">
    <property type="protein sequence ID" value="CAG87900.1"/>
    <property type="molecule type" value="Genomic_DNA"/>
</dbReference>
<dbReference type="RefSeq" id="XP_459666.1">
    <property type="nucleotide sequence ID" value="XM_459666.1"/>
</dbReference>
<dbReference type="SMR" id="Q6BQ54"/>
<dbReference type="FunCoup" id="Q6BQ54">
    <property type="interactions" value="360"/>
</dbReference>
<dbReference type="STRING" id="284592.Q6BQ54"/>
<dbReference type="GeneID" id="2901845"/>
<dbReference type="KEGG" id="dha:DEHA2E08228g"/>
<dbReference type="VEuPathDB" id="FungiDB:DEHA2E08228g"/>
<dbReference type="eggNOG" id="KOG0534">
    <property type="taxonomic scope" value="Eukaryota"/>
</dbReference>
<dbReference type="HOGENOM" id="CLU_003827_9_1_1"/>
<dbReference type="InParanoid" id="Q6BQ54"/>
<dbReference type="OMA" id="KGPEMQK"/>
<dbReference type="OrthoDB" id="432685at2759"/>
<dbReference type="Proteomes" id="UP000000599">
    <property type="component" value="Chromosome E"/>
</dbReference>
<dbReference type="GO" id="GO:0005741">
    <property type="term" value="C:mitochondrial outer membrane"/>
    <property type="evidence" value="ECO:0007669"/>
    <property type="project" value="UniProtKB-SubCell"/>
</dbReference>
<dbReference type="GO" id="GO:0004128">
    <property type="term" value="F:cytochrome-b5 reductase activity, acting on NAD(P)H"/>
    <property type="evidence" value="ECO:0007669"/>
    <property type="project" value="UniProtKB-EC"/>
</dbReference>
<dbReference type="GO" id="GO:0006696">
    <property type="term" value="P:ergosterol biosynthetic process"/>
    <property type="evidence" value="ECO:0007669"/>
    <property type="project" value="TreeGrafter"/>
</dbReference>
<dbReference type="CDD" id="cd06183">
    <property type="entry name" value="cyt_b5_reduct_like"/>
    <property type="match status" value="1"/>
</dbReference>
<dbReference type="FunFam" id="2.40.30.10:FF:000032">
    <property type="entry name" value="NADH-cytochrome b5 reductase"/>
    <property type="match status" value="1"/>
</dbReference>
<dbReference type="FunFam" id="3.40.50.80:FF:000009">
    <property type="entry name" value="NADH-cytochrome b5 reductase"/>
    <property type="match status" value="1"/>
</dbReference>
<dbReference type="Gene3D" id="3.40.50.80">
    <property type="entry name" value="Nucleotide-binding domain of ferredoxin-NADP reductase (FNR) module"/>
    <property type="match status" value="1"/>
</dbReference>
<dbReference type="Gene3D" id="2.40.30.10">
    <property type="entry name" value="Translation factors"/>
    <property type="match status" value="1"/>
</dbReference>
<dbReference type="InterPro" id="IPR001834">
    <property type="entry name" value="CBR-like"/>
</dbReference>
<dbReference type="InterPro" id="IPR008333">
    <property type="entry name" value="Cbr1-like_FAD-bd_dom"/>
</dbReference>
<dbReference type="InterPro" id="IPR017927">
    <property type="entry name" value="FAD-bd_FR_type"/>
</dbReference>
<dbReference type="InterPro" id="IPR001709">
    <property type="entry name" value="Flavoprot_Pyr_Nucl_cyt_Rdtase"/>
</dbReference>
<dbReference type="InterPro" id="IPR039261">
    <property type="entry name" value="FNR_nucleotide-bd"/>
</dbReference>
<dbReference type="InterPro" id="IPR001433">
    <property type="entry name" value="OxRdtase_FAD/NAD-bd"/>
</dbReference>
<dbReference type="InterPro" id="IPR017938">
    <property type="entry name" value="Riboflavin_synthase-like_b-brl"/>
</dbReference>
<dbReference type="PANTHER" id="PTHR19370">
    <property type="entry name" value="NADH-CYTOCHROME B5 REDUCTASE"/>
    <property type="match status" value="1"/>
</dbReference>
<dbReference type="PANTHER" id="PTHR19370:SF171">
    <property type="entry name" value="NADH-CYTOCHROME B5 REDUCTASE 2"/>
    <property type="match status" value="1"/>
</dbReference>
<dbReference type="Pfam" id="PF00970">
    <property type="entry name" value="FAD_binding_6"/>
    <property type="match status" value="1"/>
</dbReference>
<dbReference type="Pfam" id="PF00175">
    <property type="entry name" value="NAD_binding_1"/>
    <property type="match status" value="1"/>
</dbReference>
<dbReference type="PRINTS" id="PR00406">
    <property type="entry name" value="CYTB5RDTASE"/>
</dbReference>
<dbReference type="PRINTS" id="PR00371">
    <property type="entry name" value="FPNCR"/>
</dbReference>
<dbReference type="SUPFAM" id="SSF52343">
    <property type="entry name" value="Ferredoxin reductase-like, C-terminal NADP-linked domain"/>
    <property type="match status" value="1"/>
</dbReference>
<dbReference type="SUPFAM" id="SSF63380">
    <property type="entry name" value="Riboflavin synthase domain-like"/>
    <property type="match status" value="1"/>
</dbReference>
<dbReference type="PROSITE" id="PS51384">
    <property type="entry name" value="FAD_FR"/>
    <property type="match status" value="1"/>
</dbReference>
<accession>Q6BQ54</accession>
<name>MCR1_DEBHA</name>
<comment type="function">
    <text evidence="1">May mediate the reduction of outer membrane cytochrome b5.</text>
</comment>
<comment type="catalytic activity">
    <reaction>
        <text>2 Fe(III)-[cytochrome b5] + NADH = 2 Fe(II)-[cytochrome b5] + NAD(+) + H(+)</text>
        <dbReference type="Rhea" id="RHEA:46680"/>
        <dbReference type="Rhea" id="RHEA-COMP:10438"/>
        <dbReference type="Rhea" id="RHEA-COMP:10439"/>
        <dbReference type="ChEBI" id="CHEBI:15378"/>
        <dbReference type="ChEBI" id="CHEBI:29033"/>
        <dbReference type="ChEBI" id="CHEBI:29034"/>
        <dbReference type="ChEBI" id="CHEBI:57540"/>
        <dbReference type="ChEBI" id="CHEBI:57945"/>
        <dbReference type="EC" id="1.6.2.2"/>
    </reaction>
</comment>
<comment type="cofactor">
    <cofactor evidence="1">
        <name>FAD</name>
        <dbReference type="ChEBI" id="CHEBI:57692"/>
    </cofactor>
</comment>
<comment type="subcellular location">
    <subcellularLocation>
        <location evidence="1">Mitochondrion outer membrane</location>
        <topology evidence="1">Single-pass membrane protein</topology>
    </subcellularLocation>
</comment>
<comment type="similarity">
    <text evidence="4">Belongs to the flavoprotein pyridine nucleotide cytochrome reductase family.</text>
</comment>
<reference key="1">
    <citation type="journal article" date="2004" name="Nature">
        <title>Genome evolution in yeasts.</title>
        <authorList>
            <person name="Dujon B."/>
            <person name="Sherman D."/>
            <person name="Fischer G."/>
            <person name="Durrens P."/>
            <person name="Casaregola S."/>
            <person name="Lafontaine I."/>
            <person name="de Montigny J."/>
            <person name="Marck C."/>
            <person name="Neuveglise C."/>
            <person name="Talla E."/>
            <person name="Goffard N."/>
            <person name="Frangeul L."/>
            <person name="Aigle M."/>
            <person name="Anthouard V."/>
            <person name="Babour A."/>
            <person name="Barbe V."/>
            <person name="Barnay S."/>
            <person name="Blanchin S."/>
            <person name="Beckerich J.-M."/>
            <person name="Beyne E."/>
            <person name="Bleykasten C."/>
            <person name="Boisrame A."/>
            <person name="Boyer J."/>
            <person name="Cattolico L."/>
            <person name="Confanioleri F."/>
            <person name="de Daruvar A."/>
            <person name="Despons L."/>
            <person name="Fabre E."/>
            <person name="Fairhead C."/>
            <person name="Ferry-Dumazet H."/>
            <person name="Groppi A."/>
            <person name="Hantraye F."/>
            <person name="Hennequin C."/>
            <person name="Jauniaux N."/>
            <person name="Joyet P."/>
            <person name="Kachouri R."/>
            <person name="Kerrest A."/>
            <person name="Koszul R."/>
            <person name="Lemaire M."/>
            <person name="Lesur I."/>
            <person name="Ma L."/>
            <person name="Muller H."/>
            <person name="Nicaud J.-M."/>
            <person name="Nikolski M."/>
            <person name="Oztas S."/>
            <person name="Ozier-Kalogeropoulos O."/>
            <person name="Pellenz S."/>
            <person name="Potier S."/>
            <person name="Richard G.-F."/>
            <person name="Straub M.-L."/>
            <person name="Suleau A."/>
            <person name="Swennen D."/>
            <person name="Tekaia F."/>
            <person name="Wesolowski-Louvel M."/>
            <person name="Westhof E."/>
            <person name="Wirth B."/>
            <person name="Zeniou-Meyer M."/>
            <person name="Zivanovic Y."/>
            <person name="Bolotin-Fukuhara M."/>
            <person name="Thierry A."/>
            <person name="Bouchier C."/>
            <person name="Caudron B."/>
            <person name="Scarpelli C."/>
            <person name="Gaillardin C."/>
            <person name="Weissenbach J."/>
            <person name="Wincker P."/>
            <person name="Souciet J.-L."/>
        </authorList>
    </citation>
    <scope>NUCLEOTIDE SEQUENCE [LARGE SCALE GENOMIC DNA]</scope>
    <source>
        <strain>ATCC 36239 / CBS 767 / BCRC 21394 / JCM 1990 / NBRC 0083 / IGC 2968</strain>
    </source>
</reference>
<evidence type="ECO:0000250" key="1"/>
<evidence type="ECO:0000255" key="2"/>
<evidence type="ECO:0000255" key="3">
    <source>
        <dbReference type="PROSITE-ProRule" id="PRU00716"/>
    </source>
</evidence>
<evidence type="ECO:0000305" key="4"/>
<sequence>MSFTRQLTKNLTSFKVLAPFAAAVGSVGIAYQYSTSSIMNETGKTFTGNDEWIDLKLAKSWDTTHNTKHFVFELANQDDVSGLINASCLLTKFVTPKGNNVIRPYTPISDVDGKGSIEFVIKKYDGGKMSSHIHDLKPNDTLAFKGPVVKWKWEPNQYKSIALIGGGTGITPLYQLMHEITKNPEDKTKVNLFYGNLTEKDILIKKELDTIAEKHKDQVNVVYFLDKAPENWNGETGYISKEFLQSKLPGPGKDNKVFVCGPPGLYKALSGPKKSPTDQGEVEGALADLGYTKENVFKF</sequence>